<keyword id="KW-0131">Cell cycle</keyword>
<keyword id="KW-0132">Cell division</keyword>
<keyword id="KW-0133">Cell shape</keyword>
<keyword id="KW-0961">Cell wall biogenesis/degradation</keyword>
<keyword id="KW-0963">Cytoplasm</keyword>
<keyword id="KW-0274">FAD</keyword>
<keyword id="KW-0285">Flavoprotein</keyword>
<keyword id="KW-0521">NADP</keyword>
<keyword id="KW-0560">Oxidoreductase</keyword>
<keyword id="KW-0573">Peptidoglycan synthesis</keyword>
<keyword id="KW-1185">Reference proteome</keyword>
<protein>
    <recommendedName>
        <fullName evidence="1">UDP-N-acetylenolpyruvoylglucosamine reductase</fullName>
        <ecNumber evidence="1">1.3.1.98</ecNumber>
    </recommendedName>
    <alternativeName>
        <fullName evidence="1">UDP-N-acetylmuramate dehydrogenase</fullName>
    </alternativeName>
</protein>
<dbReference type="EC" id="1.3.1.98" evidence="1"/>
<dbReference type="EMBL" id="CP000930">
    <property type="protein sequence ID" value="ABZ84618.1"/>
    <property type="molecule type" value="Genomic_DNA"/>
</dbReference>
<dbReference type="SMR" id="B0TGC2"/>
<dbReference type="STRING" id="498761.HM1_2061"/>
<dbReference type="KEGG" id="hmo:HM1_2061"/>
<dbReference type="eggNOG" id="COG0812">
    <property type="taxonomic scope" value="Bacteria"/>
</dbReference>
<dbReference type="HOGENOM" id="CLU_035304_1_1_9"/>
<dbReference type="OrthoDB" id="9804753at2"/>
<dbReference type="UniPathway" id="UPA00219"/>
<dbReference type="Proteomes" id="UP000008550">
    <property type="component" value="Chromosome"/>
</dbReference>
<dbReference type="GO" id="GO:0005829">
    <property type="term" value="C:cytosol"/>
    <property type="evidence" value="ECO:0007669"/>
    <property type="project" value="TreeGrafter"/>
</dbReference>
<dbReference type="GO" id="GO:0071949">
    <property type="term" value="F:FAD binding"/>
    <property type="evidence" value="ECO:0007669"/>
    <property type="project" value="InterPro"/>
</dbReference>
<dbReference type="GO" id="GO:0008762">
    <property type="term" value="F:UDP-N-acetylmuramate dehydrogenase activity"/>
    <property type="evidence" value="ECO:0007669"/>
    <property type="project" value="UniProtKB-UniRule"/>
</dbReference>
<dbReference type="GO" id="GO:0051301">
    <property type="term" value="P:cell division"/>
    <property type="evidence" value="ECO:0007669"/>
    <property type="project" value="UniProtKB-KW"/>
</dbReference>
<dbReference type="GO" id="GO:0071555">
    <property type="term" value="P:cell wall organization"/>
    <property type="evidence" value="ECO:0007669"/>
    <property type="project" value="UniProtKB-KW"/>
</dbReference>
<dbReference type="GO" id="GO:0009252">
    <property type="term" value="P:peptidoglycan biosynthetic process"/>
    <property type="evidence" value="ECO:0007669"/>
    <property type="project" value="UniProtKB-UniRule"/>
</dbReference>
<dbReference type="GO" id="GO:0008360">
    <property type="term" value="P:regulation of cell shape"/>
    <property type="evidence" value="ECO:0007669"/>
    <property type="project" value="UniProtKB-KW"/>
</dbReference>
<dbReference type="Gene3D" id="3.30.465.10">
    <property type="match status" value="1"/>
</dbReference>
<dbReference type="Gene3D" id="3.90.78.10">
    <property type="entry name" value="UDP-N-acetylenolpyruvoylglucosamine reductase, C-terminal domain"/>
    <property type="match status" value="1"/>
</dbReference>
<dbReference type="Gene3D" id="3.30.43.10">
    <property type="entry name" value="Uridine Diphospho-n-acetylenolpyruvylglucosamine Reductase, domain 2"/>
    <property type="match status" value="1"/>
</dbReference>
<dbReference type="HAMAP" id="MF_00037">
    <property type="entry name" value="MurB"/>
    <property type="match status" value="1"/>
</dbReference>
<dbReference type="InterPro" id="IPR016166">
    <property type="entry name" value="FAD-bd_PCMH"/>
</dbReference>
<dbReference type="InterPro" id="IPR036318">
    <property type="entry name" value="FAD-bd_PCMH-like_sf"/>
</dbReference>
<dbReference type="InterPro" id="IPR016167">
    <property type="entry name" value="FAD-bd_PCMH_sub1"/>
</dbReference>
<dbReference type="InterPro" id="IPR016169">
    <property type="entry name" value="FAD-bd_PCMH_sub2"/>
</dbReference>
<dbReference type="InterPro" id="IPR003170">
    <property type="entry name" value="MurB"/>
</dbReference>
<dbReference type="InterPro" id="IPR011601">
    <property type="entry name" value="MurB_C"/>
</dbReference>
<dbReference type="InterPro" id="IPR036635">
    <property type="entry name" value="MurB_C_sf"/>
</dbReference>
<dbReference type="InterPro" id="IPR006094">
    <property type="entry name" value="Oxid_FAD_bind_N"/>
</dbReference>
<dbReference type="NCBIfam" id="TIGR00179">
    <property type="entry name" value="murB"/>
    <property type="match status" value="1"/>
</dbReference>
<dbReference type="NCBIfam" id="NF010480">
    <property type="entry name" value="PRK13905.1"/>
    <property type="match status" value="1"/>
</dbReference>
<dbReference type="PANTHER" id="PTHR21071">
    <property type="entry name" value="UDP-N-ACETYLENOLPYRUVOYLGLUCOSAMINE REDUCTASE"/>
    <property type="match status" value="1"/>
</dbReference>
<dbReference type="PANTHER" id="PTHR21071:SF4">
    <property type="entry name" value="UDP-N-ACETYLENOLPYRUVOYLGLUCOSAMINE REDUCTASE"/>
    <property type="match status" value="1"/>
</dbReference>
<dbReference type="Pfam" id="PF01565">
    <property type="entry name" value="FAD_binding_4"/>
    <property type="match status" value="1"/>
</dbReference>
<dbReference type="Pfam" id="PF02873">
    <property type="entry name" value="MurB_C"/>
    <property type="match status" value="1"/>
</dbReference>
<dbReference type="SUPFAM" id="SSF56176">
    <property type="entry name" value="FAD-binding/transporter-associated domain-like"/>
    <property type="match status" value="1"/>
</dbReference>
<dbReference type="SUPFAM" id="SSF56194">
    <property type="entry name" value="Uridine diphospho-N-Acetylenolpyruvylglucosamine reductase, MurB, C-terminal domain"/>
    <property type="match status" value="1"/>
</dbReference>
<dbReference type="PROSITE" id="PS51387">
    <property type="entry name" value="FAD_PCMH"/>
    <property type="match status" value="1"/>
</dbReference>
<comment type="function">
    <text evidence="1">Cell wall formation.</text>
</comment>
<comment type="catalytic activity">
    <reaction evidence="1">
        <text>UDP-N-acetyl-alpha-D-muramate + NADP(+) = UDP-N-acetyl-3-O-(1-carboxyvinyl)-alpha-D-glucosamine + NADPH + H(+)</text>
        <dbReference type="Rhea" id="RHEA:12248"/>
        <dbReference type="ChEBI" id="CHEBI:15378"/>
        <dbReference type="ChEBI" id="CHEBI:57783"/>
        <dbReference type="ChEBI" id="CHEBI:58349"/>
        <dbReference type="ChEBI" id="CHEBI:68483"/>
        <dbReference type="ChEBI" id="CHEBI:70757"/>
        <dbReference type="EC" id="1.3.1.98"/>
    </reaction>
</comment>
<comment type="cofactor">
    <cofactor evidence="1">
        <name>FAD</name>
        <dbReference type="ChEBI" id="CHEBI:57692"/>
    </cofactor>
</comment>
<comment type="pathway">
    <text evidence="1">Cell wall biogenesis; peptidoglycan biosynthesis.</text>
</comment>
<comment type="subcellular location">
    <subcellularLocation>
        <location evidence="1">Cytoplasm</location>
    </subcellularLocation>
</comment>
<comment type="similarity">
    <text evidence="1">Belongs to the MurB family.</text>
</comment>
<name>MURB_HELMI</name>
<proteinExistence type="inferred from homology"/>
<sequence>MTQITRDFRGQWMQQEPMSRHTTWKIGGPADLFAIPADEADLAGLIRRCREKGIPWMVVGNGSNLLVADKGIRGVVIHLGRAFSDRRLDDRRLTAGGGCALSGLARFAVRAGLQGLEFACGIPASLGGAVAMNAGAHGGAMENIVRWVDVIDDEGRIRRYRGEEMDFAYRHSRLQREKAIVVRVGMELRWGDREALERWMEEKLALRRKSQPLEFPNAGSVFLNPPGSLSAGQLIEEAGMKGFAIGGAQVSERHANFIVNRGGATAADVLALIDAVRARVLATCGIELQSEVRVIGDSGGQVDGGGTEDSHQRG</sequence>
<reference key="1">
    <citation type="journal article" date="2008" name="J. Bacteriol.">
        <title>The genome of Heliobacterium modesticaldum, a phototrophic representative of the Firmicutes containing the simplest photosynthetic apparatus.</title>
        <authorList>
            <person name="Sattley W.M."/>
            <person name="Madigan M.T."/>
            <person name="Swingley W.D."/>
            <person name="Cheung P.C."/>
            <person name="Clocksin K.M."/>
            <person name="Conrad A.L."/>
            <person name="Dejesa L.C."/>
            <person name="Honchak B.M."/>
            <person name="Jung D.O."/>
            <person name="Karbach L.E."/>
            <person name="Kurdoglu A."/>
            <person name="Lahiri S."/>
            <person name="Mastrian S.D."/>
            <person name="Page L.E."/>
            <person name="Taylor H.L."/>
            <person name="Wang Z.T."/>
            <person name="Raymond J."/>
            <person name="Chen M."/>
            <person name="Blankenship R.E."/>
            <person name="Touchman J.W."/>
        </authorList>
    </citation>
    <scope>NUCLEOTIDE SEQUENCE [LARGE SCALE GENOMIC DNA]</scope>
    <source>
        <strain>ATCC 51547 / Ice1</strain>
    </source>
</reference>
<organism>
    <name type="scientific">Heliobacterium modesticaldum (strain ATCC 51547 / Ice1)</name>
    <dbReference type="NCBI Taxonomy" id="498761"/>
    <lineage>
        <taxon>Bacteria</taxon>
        <taxon>Bacillati</taxon>
        <taxon>Bacillota</taxon>
        <taxon>Clostridia</taxon>
        <taxon>Eubacteriales</taxon>
        <taxon>Heliobacteriaceae</taxon>
        <taxon>Heliomicrobium</taxon>
    </lineage>
</organism>
<accession>B0TGC2</accession>
<gene>
    <name evidence="1" type="primary">murB</name>
    <name type="ordered locus">Helmi_19930</name>
    <name type="ORF">HM1_2061</name>
</gene>
<evidence type="ECO:0000255" key="1">
    <source>
        <dbReference type="HAMAP-Rule" id="MF_00037"/>
    </source>
</evidence>
<feature type="chain" id="PRO_1000191425" description="UDP-N-acetylenolpyruvoylglucosamine reductase">
    <location>
        <begin position="1"/>
        <end position="314"/>
    </location>
</feature>
<feature type="domain" description="FAD-binding PCMH-type" evidence="1">
    <location>
        <begin position="25"/>
        <end position="191"/>
    </location>
</feature>
<feature type="active site" evidence="1">
    <location>
        <position position="170"/>
    </location>
</feature>
<feature type="active site" description="Proton donor" evidence="1">
    <location>
        <position position="220"/>
    </location>
</feature>
<feature type="active site" evidence="1">
    <location>
        <position position="291"/>
    </location>
</feature>